<accession>Q8UG98</accession>
<protein>
    <recommendedName>
        <fullName evidence="1">Phosphoribosylformylglycinamidine cyclo-ligase</fullName>
        <ecNumber evidence="1">6.3.3.1</ecNumber>
    </recommendedName>
    <alternativeName>
        <fullName evidence="1">AIR synthase</fullName>
    </alternativeName>
    <alternativeName>
        <fullName evidence="1">AIRS</fullName>
    </alternativeName>
    <alternativeName>
        <fullName evidence="1">Phosphoribosyl-aminoimidazole synthetase</fullName>
    </alternativeName>
</protein>
<sequence>MSQSGKNGLTYSDAGVDIDAGNLMVEKIKPAVRSTRRPGADGEIGGFGGLFDLKAAGFTDPVLVAANDGVGTKLKIAIDADYHDTVGIDLVAMCVNDLVVQGAEPLFFLDYFATGKLDPDQGAAIVSGIAAGCRESGCALIGGETAEMPGMYSDGDYDLAGFAVGAAERGQLLPAGDIAEGDVILGLSSSGVHSNGFSLVRKIVSLSGLEWSAPAPFADGKKLGEALLTPTRIYVKPLLKAIRETGALKALAHITGGGFPENIPRVLPKHLAAEIDLAAIKVPAVFSWLAKTGGVEAHEMLRTFNCGVGMIVVVSAENATKVTEALTAEGETVFPLGRMVAREDGAHGTIYKGTLGL</sequence>
<feature type="chain" id="PRO_0000148193" description="Phosphoribosylformylglycinamidine cyclo-ligase">
    <location>
        <begin position="1"/>
        <end position="357"/>
    </location>
</feature>
<name>PUR5_AGRFC</name>
<organism>
    <name type="scientific">Agrobacterium fabrum (strain C58 / ATCC 33970)</name>
    <name type="common">Agrobacterium tumefaciens (strain C58)</name>
    <dbReference type="NCBI Taxonomy" id="176299"/>
    <lineage>
        <taxon>Bacteria</taxon>
        <taxon>Pseudomonadati</taxon>
        <taxon>Pseudomonadota</taxon>
        <taxon>Alphaproteobacteria</taxon>
        <taxon>Hyphomicrobiales</taxon>
        <taxon>Rhizobiaceae</taxon>
        <taxon>Rhizobium/Agrobacterium group</taxon>
        <taxon>Agrobacterium</taxon>
        <taxon>Agrobacterium tumefaciens complex</taxon>
    </lineage>
</organism>
<comment type="catalytic activity">
    <reaction evidence="1">
        <text>2-formamido-N(1)-(5-O-phospho-beta-D-ribosyl)acetamidine + ATP = 5-amino-1-(5-phospho-beta-D-ribosyl)imidazole + ADP + phosphate + H(+)</text>
        <dbReference type="Rhea" id="RHEA:23032"/>
        <dbReference type="ChEBI" id="CHEBI:15378"/>
        <dbReference type="ChEBI" id="CHEBI:30616"/>
        <dbReference type="ChEBI" id="CHEBI:43474"/>
        <dbReference type="ChEBI" id="CHEBI:137981"/>
        <dbReference type="ChEBI" id="CHEBI:147287"/>
        <dbReference type="ChEBI" id="CHEBI:456216"/>
        <dbReference type="EC" id="6.3.3.1"/>
    </reaction>
</comment>
<comment type="pathway">
    <text evidence="1">Purine metabolism; IMP biosynthesis via de novo pathway; 5-amino-1-(5-phospho-D-ribosyl)imidazole from N(2)-formyl-N(1)-(5-phospho-D-ribosyl)glycinamide: step 2/2.</text>
</comment>
<comment type="subcellular location">
    <subcellularLocation>
        <location evidence="1">Cytoplasm</location>
    </subcellularLocation>
</comment>
<comment type="similarity">
    <text evidence="1">Belongs to the AIR synthase family.</text>
</comment>
<evidence type="ECO:0000255" key="1">
    <source>
        <dbReference type="HAMAP-Rule" id="MF_00741"/>
    </source>
</evidence>
<proteinExistence type="inferred from homology"/>
<dbReference type="EC" id="6.3.3.1" evidence="1"/>
<dbReference type="EMBL" id="AE007869">
    <property type="protein sequence ID" value="AAK86944.2"/>
    <property type="molecule type" value="Genomic_DNA"/>
</dbReference>
<dbReference type="PIR" id="AD2717">
    <property type="entry name" value="AD2717"/>
</dbReference>
<dbReference type="PIR" id="G97498">
    <property type="entry name" value="G97498"/>
</dbReference>
<dbReference type="RefSeq" id="NP_354159.2">
    <property type="nucleotide sequence ID" value="NC_003062.2"/>
</dbReference>
<dbReference type="RefSeq" id="WP_006312859.1">
    <property type="nucleotide sequence ID" value="NC_003062.2"/>
</dbReference>
<dbReference type="SMR" id="Q8UG98"/>
<dbReference type="STRING" id="176299.Atu1141"/>
<dbReference type="EnsemblBacteria" id="AAK86944">
    <property type="protein sequence ID" value="AAK86944"/>
    <property type="gene ID" value="Atu1141"/>
</dbReference>
<dbReference type="GeneID" id="1133179"/>
<dbReference type="KEGG" id="atu:Atu1141"/>
<dbReference type="PATRIC" id="fig|176299.10.peg.1158"/>
<dbReference type="eggNOG" id="COG0150">
    <property type="taxonomic scope" value="Bacteria"/>
</dbReference>
<dbReference type="HOGENOM" id="CLU_047116_0_0_5"/>
<dbReference type="OrthoDB" id="9777881at2"/>
<dbReference type="PhylomeDB" id="Q8UG98"/>
<dbReference type="BioCyc" id="AGRO:ATU1141-MONOMER"/>
<dbReference type="UniPathway" id="UPA00074">
    <property type="reaction ID" value="UER00129"/>
</dbReference>
<dbReference type="Proteomes" id="UP000000813">
    <property type="component" value="Chromosome circular"/>
</dbReference>
<dbReference type="GO" id="GO:0005829">
    <property type="term" value="C:cytosol"/>
    <property type="evidence" value="ECO:0007669"/>
    <property type="project" value="TreeGrafter"/>
</dbReference>
<dbReference type="GO" id="GO:0005524">
    <property type="term" value="F:ATP binding"/>
    <property type="evidence" value="ECO:0007669"/>
    <property type="project" value="UniProtKB-KW"/>
</dbReference>
<dbReference type="GO" id="GO:0004637">
    <property type="term" value="F:phosphoribosylamine-glycine ligase activity"/>
    <property type="evidence" value="ECO:0007669"/>
    <property type="project" value="TreeGrafter"/>
</dbReference>
<dbReference type="GO" id="GO:0004641">
    <property type="term" value="F:phosphoribosylformylglycinamidine cyclo-ligase activity"/>
    <property type="evidence" value="ECO:0007669"/>
    <property type="project" value="UniProtKB-UniRule"/>
</dbReference>
<dbReference type="GO" id="GO:0006189">
    <property type="term" value="P:'de novo' IMP biosynthetic process"/>
    <property type="evidence" value="ECO:0007669"/>
    <property type="project" value="UniProtKB-UniRule"/>
</dbReference>
<dbReference type="GO" id="GO:0046084">
    <property type="term" value="P:adenine biosynthetic process"/>
    <property type="evidence" value="ECO:0007669"/>
    <property type="project" value="TreeGrafter"/>
</dbReference>
<dbReference type="CDD" id="cd02196">
    <property type="entry name" value="PurM"/>
    <property type="match status" value="1"/>
</dbReference>
<dbReference type="FunFam" id="3.30.1330.10:FF:000001">
    <property type="entry name" value="Phosphoribosylformylglycinamidine cyclo-ligase"/>
    <property type="match status" value="1"/>
</dbReference>
<dbReference type="FunFam" id="3.90.650.10:FF:000007">
    <property type="entry name" value="Trifunctional purine biosynthetic protein adenosine-3"/>
    <property type="match status" value="1"/>
</dbReference>
<dbReference type="Gene3D" id="3.90.650.10">
    <property type="entry name" value="PurM-like C-terminal domain"/>
    <property type="match status" value="1"/>
</dbReference>
<dbReference type="Gene3D" id="3.30.1330.10">
    <property type="entry name" value="PurM-like, N-terminal domain"/>
    <property type="match status" value="1"/>
</dbReference>
<dbReference type="HAMAP" id="MF_00741">
    <property type="entry name" value="AIRS"/>
    <property type="match status" value="1"/>
</dbReference>
<dbReference type="InterPro" id="IPR010918">
    <property type="entry name" value="PurM-like_C_dom"/>
</dbReference>
<dbReference type="InterPro" id="IPR036676">
    <property type="entry name" value="PurM-like_C_sf"/>
</dbReference>
<dbReference type="InterPro" id="IPR016188">
    <property type="entry name" value="PurM-like_N"/>
</dbReference>
<dbReference type="InterPro" id="IPR036921">
    <property type="entry name" value="PurM-like_N_sf"/>
</dbReference>
<dbReference type="InterPro" id="IPR004733">
    <property type="entry name" value="PurM_cligase"/>
</dbReference>
<dbReference type="NCBIfam" id="TIGR00878">
    <property type="entry name" value="purM"/>
    <property type="match status" value="1"/>
</dbReference>
<dbReference type="PANTHER" id="PTHR10520:SF12">
    <property type="entry name" value="TRIFUNCTIONAL PURINE BIOSYNTHETIC PROTEIN ADENOSINE-3"/>
    <property type="match status" value="1"/>
</dbReference>
<dbReference type="PANTHER" id="PTHR10520">
    <property type="entry name" value="TRIFUNCTIONAL PURINE BIOSYNTHETIC PROTEIN ADENOSINE-3-RELATED"/>
    <property type="match status" value="1"/>
</dbReference>
<dbReference type="Pfam" id="PF00586">
    <property type="entry name" value="AIRS"/>
    <property type="match status" value="1"/>
</dbReference>
<dbReference type="Pfam" id="PF02769">
    <property type="entry name" value="AIRS_C"/>
    <property type="match status" value="1"/>
</dbReference>
<dbReference type="SUPFAM" id="SSF56042">
    <property type="entry name" value="PurM C-terminal domain-like"/>
    <property type="match status" value="1"/>
</dbReference>
<dbReference type="SUPFAM" id="SSF55326">
    <property type="entry name" value="PurM N-terminal domain-like"/>
    <property type="match status" value="1"/>
</dbReference>
<keyword id="KW-0067">ATP-binding</keyword>
<keyword id="KW-0963">Cytoplasm</keyword>
<keyword id="KW-0436">Ligase</keyword>
<keyword id="KW-0547">Nucleotide-binding</keyword>
<keyword id="KW-0658">Purine biosynthesis</keyword>
<keyword id="KW-1185">Reference proteome</keyword>
<gene>
    <name evidence="1" type="primary">purM</name>
    <name type="ordered locus">Atu1141</name>
    <name type="ORF">AGR_C_2111</name>
</gene>
<reference key="1">
    <citation type="journal article" date="2001" name="Science">
        <title>The genome of the natural genetic engineer Agrobacterium tumefaciens C58.</title>
        <authorList>
            <person name="Wood D.W."/>
            <person name="Setubal J.C."/>
            <person name="Kaul R."/>
            <person name="Monks D.E."/>
            <person name="Kitajima J.P."/>
            <person name="Okura V.K."/>
            <person name="Zhou Y."/>
            <person name="Chen L."/>
            <person name="Wood G.E."/>
            <person name="Almeida N.F. Jr."/>
            <person name="Woo L."/>
            <person name="Chen Y."/>
            <person name="Paulsen I.T."/>
            <person name="Eisen J.A."/>
            <person name="Karp P.D."/>
            <person name="Bovee D. Sr."/>
            <person name="Chapman P."/>
            <person name="Clendenning J."/>
            <person name="Deatherage G."/>
            <person name="Gillet W."/>
            <person name="Grant C."/>
            <person name="Kutyavin T."/>
            <person name="Levy R."/>
            <person name="Li M.-J."/>
            <person name="McClelland E."/>
            <person name="Palmieri A."/>
            <person name="Raymond C."/>
            <person name="Rouse G."/>
            <person name="Saenphimmachak C."/>
            <person name="Wu Z."/>
            <person name="Romero P."/>
            <person name="Gordon D."/>
            <person name="Zhang S."/>
            <person name="Yoo H."/>
            <person name="Tao Y."/>
            <person name="Biddle P."/>
            <person name="Jung M."/>
            <person name="Krespan W."/>
            <person name="Perry M."/>
            <person name="Gordon-Kamm B."/>
            <person name="Liao L."/>
            <person name="Kim S."/>
            <person name="Hendrick C."/>
            <person name="Zhao Z.-Y."/>
            <person name="Dolan M."/>
            <person name="Chumley F."/>
            <person name="Tingey S.V."/>
            <person name="Tomb J.-F."/>
            <person name="Gordon M.P."/>
            <person name="Olson M.V."/>
            <person name="Nester E.W."/>
        </authorList>
    </citation>
    <scope>NUCLEOTIDE SEQUENCE [LARGE SCALE GENOMIC DNA]</scope>
    <source>
        <strain>C58 / ATCC 33970</strain>
    </source>
</reference>
<reference key="2">
    <citation type="journal article" date="2001" name="Science">
        <title>Genome sequence of the plant pathogen and biotechnology agent Agrobacterium tumefaciens C58.</title>
        <authorList>
            <person name="Goodner B."/>
            <person name="Hinkle G."/>
            <person name="Gattung S."/>
            <person name="Miller N."/>
            <person name="Blanchard M."/>
            <person name="Qurollo B."/>
            <person name="Goldman B.S."/>
            <person name="Cao Y."/>
            <person name="Askenazi M."/>
            <person name="Halling C."/>
            <person name="Mullin L."/>
            <person name="Houmiel K."/>
            <person name="Gordon J."/>
            <person name="Vaudin M."/>
            <person name="Iartchouk O."/>
            <person name="Epp A."/>
            <person name="Liu F."/>
            <person name="Wollam C."/>
            <person name="Allinger M."/>
            <person name="Doughty D."/>
            <person name="Scott C."/>
            <person name="Lappas C."/>
            <person name="Markelz B."/>
            <person name="Flanagan C."/>
            <person name="Crowell C."/>
            <person name="Gurson J."/>
            <person name="Lomo C."/>
            <person name="Sear C."/>
            <person name="Strub G."/>
            <person name="Cielo C."/>
            <person name="Slater S."/>
        </authorList>
    </citation>
    <scope>NUCLEOTIDE SEQUENCE [LARGE SCALE GENOMIC DNA]</scope>
    <source>
        <strain>C58 / ATCC 33970</strain>
    </source>
</reference>